<proteinExistence type="inferred from homology"/>
<gene>
    <name evidence="1" type="primary">hisH</name>
    <name type="ordered locus">DSY3910</name>
</gene>
<keyword id="KW-0028">Amino-acid biosynthesis</keyword>
<keyword id="KW-0963">Cytoplasm</keyword>
<keyword id="KW-0315">Glutamine amidotransferase</keyword>
<keyword id="KW-0368">Histidine biosynthesis</keyword>
<keyword id="KW-0378">Hydrolase</keyword>
<keyword id="KW-0456">Lyase</keyword>
<keyword id="KW-1185">Reference proteome</keyword>
<feature type="chain" id="PRO_1000119374" description="Imidazole glycerol phosphate synthase subunit HisH">
    <location>
        <begin position="1"/>
        <end position="211"/>
    </location>
</feature>
<feature type="domain" description="Glutamine amidotransferase type-1" evidence="1">
    <location>
        <begin position="1"/>
        <end position="206"/>
    </location>
</feature>
<feature type="active site" description="Nucleophile" evidence="1">
    <location>
        <position position="79"/>
    </location>
</feature>
<feature type="active site" evidence="1">
    <location>
        <position position="181"/>
    </location>
</feature>
<feature type="active site" evidence="1">
    <location>
        <position position="183"/>
    </location>
</feature>
<evidence type="ECO:0000255" key="1">
    <source>
        <dbReference type="HAMAP-Rule" id="MF_00278"/>
    </source>
</evidence>
<organism>
    <name type="scientific">Desulfitobacterium hafniense (strain Y51)</name>
    <dbReference type="NCBI Taxonomy" id="138119"/>
    <lineage>
        <taxon>Bacteria</taxon>
        <taxon>Bacillati</taxon>
        <taxon>Bacillota</taxon>
        <taxon>Clostridia</taxon>
        <taxon>Eubacteriales</taxon>
        <taxon>Desulfitobacteriaceae</taxon>
        <taxon>Desulfitobacterium</taxon>
    </lineage>
</organism>
<reference key="1">
    <citation type="journal article" date="2006" name="J. Bacteriol.">
        <title>Complete genome sequence of the dehalorespiring bacterium Desulfitobacterium hafniense Y51 and comparison with Dehalococcoides ethenogenes 195.</title>
        <authorList>
            <person name="Nonaka H."/>
            <person name="Keresztes G."/>
            <person name="Shinoda Y."/>
            <person name="Ikenaga Y."/>
            <person name="Abe M."/>
            <person name="Naito K."/>
            <person name="Inatomi K."/>
            <person name="Furukawa K."/>
            <person name="Inui M."/>
            <person name="Yukawa H."/>
        </authorList>
    </citation>
    <scope>NUCLEOTIDE SEQUENCE [LARGE SCALE GENOMIC DNA]</scope>
    <source>
        <strain>Y51</strain>
    </source>
</reference>
<accession>Q24QJ3</accession>
<comment type="function">
    <text evidence="1">IGPS catalyzes the conversion of PRFAR and glutamine to IGP, AICAR and glutamate. The HisH subunit catalyzes the hydrolysis of glutamine to glutamate and ammonia as part of the synthesis of IGP and AICAR. The resulting ammonia molecule is channeled to the active site of HisF.</text>
</comment>
<comment type="catalytic activity">
    <reaction evidence="1">
        <text>5-[(5-phospho-1-deoxy-D-ribulos-1-ylimino)methylamino]-1-(5-phospho-beta-D-ribosyl)imidazole-4-carboxamide + L-glutamine = D-erythro-1-(imidazol-4-yl)glycerol 3-phosphate + 5-amino-1-(5-phospho-beta-D-ribosyl)imidazole-4-carboxamide + L-glutamate + H(+)</text>
        <dbReference type="Rhea" id="RHEA:24793"/>
        <dbReference type="ChEBI" id="CHEBI:15378"/>
        <dbReference type="ChEBI" id="CHEBI:29985"/>
        <dbReference type="ChEBI" id="CHEBI:58278"/>
        <dbReference type="ChEBI" id="CHEBI:58359"/>
        <dbReference type="ChEBI" id="CHEBI:58475"/>
        <dbReference type="ChEBI" id="CHEBI:58525"/>
        <dbReference type="EC" id="4.3.2.10"/>
    </reaction>
</comment>
<comment type="catalytic activity">
    <reaction evidence="1">
        <text>L-glutamine + H2O = L-glutamate + NH4(+)</text>
        <dbReference type="Rhea" id="RHEA:15889"/>
        <dbReference type="ChEBI" id="CHEBI:15377"/>
        <dbReference type="ChEBI" id="CHEBI:28938"/>
        <dbReference type="ChEBI" id="CHEBI:29985"/>
        <dbReference type="ChEBI" id="CHEBI:58359"/>
        <dbReference type="EC" id="3.5.1.2"/>
    </reaction>
</comment>
<comment type="pathway">
    <text evidence="1">Amino-acid biosynthesis; L-histidine biosynthesis; L-histidine from 5-phospho-alpha-D-ribose 1-diphosphate: step 5/9.</text>
</comment>
<comment type="subunit">
    <text evidence="1">Heterodimer of HisH and HisF.</text>
</comment>
<comment type="subcellular location">
    <subcellularLocation>
        <location evidence="1">Cytoplasm</location>
    </subcellularLocation>
</comment>
<name>HIS5_DESHY</name>
<protein>
    <recommendedName>
        <fullName evidence="1">Imidazole glycerol phosphate synthase subunit HisH</fullName>
        <ecNumber evidence="1">4.3.2.10</ecNumber>
    </recommendedName>
    <alternativeName>
        <fullName evidence="1">IGP synthase glutaminase subunit</fullName>
        <ecNumber evidence="1">3.5.1.2</ecNumber>
    </alternativeName>
    <alternativeName>
        <fullName evidence="1">IGP synthase subunit HisH</fullName>
    </alternativeName>
    <alternativeName>
        <fullName evidence="1">ImGP synthase subunit HisH</fullName>
        <shortName evidence="1">IGPS subunit HisH</shortName>
    </alternativeName>
</protein>
<sequence length="211" mass="23385">MIGIIDYGRGNLRSVEKALWKLGYPAKVLESPAELMAVKGIILPGVGAFADAMAALEEKGWIQPLIHYAHSGMPFLGICLGMQVLFEVGEEHGEHKGLGLLPGRVVRFPAGRKIPHMGWNTLHQEKPCRLLEGIPDEAYFYFVHSYYVASEEQEILAGMSDYGVPFPALVGRDNVWGAQFHPEKSSPWGLKLLENFGKWVNEDATVSSHRS</sequence>
<dbReference type="EC" id="4.3.2.10" evidence="1"/>
<dbReference type="EC" id="3.5.1.2" evidence="1"/>
<dbReference type="EMBL" id="AP008230">
    <property type="protein sequence ID" value="BAE85699.1"/>
    <property type="molecule type" value="Genomic_DNA"/>
</dbReference>
<dbReference type="RefSeq" id="WP_005817212.1">
    <property type="nucleotide sequence ID" value="NC_007907.1"/>
</dbReference>
<dbReference type="SMR" id="Q24QJ3"/>
<dbReference type="STRING" id="138119.DSY3910"/>
<dbReference type="MEROPS" id="C26.965"/>
<dbReference type="KEGG" id="dsy:DSY3910"/>
<dbReference type="eggNOG" id="COG0118">
    <property type="taxonomic scope" value="Bacteria"/>
</dbReference>
<dbReference type="HOGENOM" id="CLU_071837_2_2_9"/>
<dbReference type="UniPathway" id="UPA00031">
    <property type="reaction ID" value="UER00010"/>
</dbReference>
<dbReference type="Proteomes" id="UP000001946">
    <property type="component" value="Chromosome"/>
</dbReference>
<dbReference type="GO" id="GO:0005737">
    <property type="term" value="C:cytoplasm"/>
    <property type="evidence" value="ECO:0007669"/>
    <property type="project" value="UniProtKB-SubCell"/>
</dbReference>
<dbReference type="GO" id="GO:0004359">
    <property type="term" value="F:glutaminase activity"/>
    <property type="evidence" value="ECO:0007669"/>
    <property type="project" value="UniProtKB-EC"/>
</dbReference>
<dbReference type="GO" id="GO:0000107">
    <property type="term" value="F:imidazoleglycerol-phosphate synthase activity"/>
    <property type="evidence" value="ECO:0007669"/>
    <property type="project" value="UniProtKB-UniRule"/>
</dbReference>
<dbReference type="GO" id="GO:0016829">
    <property type="term" value="F:lyase activity"/>
    <property type="evidence" value="ECO:0007669"/>
    <property type="project" value="UniProtKB-KW"/>
</dbReference>
<dbReference type="GO" id="GO:0000105">
    <property type="term" value="P:L-histidine biosynthetic process"/>
    <property type="evidence" value="ECO:0007669"/>
    <property type="project" value="UniProtKB-UniRule"/>
</dbReference>
<dbReference type="CDD" id="cd01748">
    <property type="entry name" value="GATase1_IGP_Synthase"/>
    <property type="match status" value="1"/>
</dbReference>
<dbReference type="Gene3D" id="3.40.50.880">
    <property type="match status" value="1"/>
</dbReference>
<dbReference type="HAMAP" id="MF_00278">
    <property type="entry name" value="HisH"/>
    <property type="match status" value="1"/>
</dbReference>
<dbReference type="InterPro" id="IPR029062">
    <property type="entry name" value="Class_I_gatase-like"/>
</dbReference>
<dbReference type="InterPro" id="IPR017926">
    <property type="entry name" value="GATASE"/>
</dbReference>
<dbReference type="InterPro" id="IPR010139">
    <property type="entry name" value="Imidazole-glycPsynth_HisH"/>
</dbReference>
<dbReference type="NCBIfam" id="TIGR01855">
    <property type="entry name" value="IMP_synth_hisH"/>
    <property type="match status" value="1"/>
</dbReference>
<dbReference type="PANTHER" id="PTHR42701">
    <property type="entry name" value="IMIDAZOLE GLYCEROL PHOSPHATE SYNTHASE SUBUNIT HISH"/>
    <property type="match status" value="1"/>
</dbReference>
<dbReference type="PANTHER" id="PTHR42701:SF1">
    <property type="entry name" value="IMIDAZOLE GLYCEROL PHOSPHATE SYNTHASE SUBUNIT HISH"/>
    <property type="match status" value="1"/>
</dbReference>
<dbReference type="Pfam" id="PF00117">
    <property type="entry name" value="GATase"/>
    <property type="match status" value="1"/>
</dbReference>
<dbReference type="PIRSF" id="PIRSF000495">
    <property type="entry name" value="Amidotransf_hisH"/>
    <property type="match status" value="1"/>
</dbReference>
<dbReference type="SUPFAM" id="SSF52317">
    <property type="entry name" value="Class I glutamine amidotransferase-like"/>
    <property type="match status" value="1"/>
</dbReference>
<dbReference type="PROSITE" id="PS51273">
    <property type="entry name" value="GATASE_TYPE_1"/>
    <property type="match status" value="1"/>
</dbReference>